<proteinExistence type="evidence at protein level"/>
<feature type="chain" id="PRO_0000316294" description="Membrane-associated guanylate kinase, WW and PDZ domain-containing protein 1">
    <location>
        <begin position="1"/>
        <end position="1255"/>
    </location>
</feature>
<feature type="domain" description="PDZ 1" evidence="5">
    <location>
        <begin position="17"/>
        <end position="105"/>
    </location>
</feature>
<feature type="domain" description="Guanylate kinase-like" evidence="4">
    <location>
        <begin position="96"/>
        <end position="287"/>
    </location>
</feature>
<feature type="domain" description="WW 1" evidence="6">
    <location>
        <begin position="300"/>
        <end position="333"/>
    </location>
</feature>
<feature type="domain" description="WW 2" evidence="6">
    <location>
        <begin position="359"/>
        <end position="392"/>
    </location>
</feature>
<feature type="domain" description="PDZ 2" evidence="5">
    <location>
        <begin position="471"/>
        <end position="553"/>
    </location>
</feature>
<feature type="domain" description="PDZ 3" evidence="5">
    <location>
        <begin position="642"/>
        <end position="720"/>
    </location>
</feature>
<feature type="domain" description="PDZ 4" evidence="5">
    <location>
        <begin position="840"/>
        <end position="922"/>
    </location>
</feature>
<feature type="domain" description="PDZ 5" evidence="5">
    <location>
        <begin position="997"/>
        <end position="1093"/>
    </location>
</feature>
<feature type="domain" description="PDZ 6" evidence="5">
    <location>
        <begin position="1151"/>
        <end position="1233"/>
    </location>
</feature>
<feature type="region of interest" description="Disordered" evidence="7">
    <location>
        <begin position="208"/>
        <end position="227"/>
    </location>
</feature>
<feature type="region of interest" description="Disordered" evidence="7">
    <location>
        <begin position="235"/>
        <end position="265"/>
    </location>
</feature>
<feature type="region of interest" description="Disordered" evidence="7">
    <location>
        <begin position="395"/>
        <end position="462"/>
    </location>
</feature>
<feature type="region of interest" description="Disordered" evidence="7">
    <location>
        <begin position="585"/>
        <end position="622"/>
    </location>
</feature>
<feature type="region of interest" description="Disordered" evidence="7">
    <location>
        <begin position="719"/>
        <end position="820"/>
    </location>
</feature>
<feature type="region of interest" description="Disordered" evidence="7">
    <location>
        <begin position="932"/>
        <end position="984"/>
    </location>
</feature>
<feature type="region of interest" description="Disordered" evidence="7">
    <location>
        <begin position="1111"/>
        <end position="1142"/>
    </location>
</feature>
<feature type="compositionally biased region" description="Low complexity" evidence="7">
    <location>
        <begin position="402"/>
        <end position="414"/>
    </location>
</feature>
<feature type="compositionally biased region" description="Pro residues" evidence="7">
    <location>
        <begin position="434"/>
        <end position="444"/>
    </location>
</feature>
<feature type="compositionally biased region" description="Polar residues" evidence="7">
    <location>
        <begin position="585"/>
        <end position="601"/>
    </location>
</feature>
<feature type="compositionally biased region" description="Low complexity" evidence="7">
    <location>
        <begin position="741"/>
        <end position="755"/>
    </location>
</feature>
<feature type="compositionally biased region" description="Polar residues" evidence="7">
    <location>
        <begin position="938"/>
        <end position="950"/>
    </location>
</feature>
<feature type="compositionally biased region" description="Polar residues" evidence="7">
    <location>
        <begin position="958"/>
        <end position="967"/>
    </location>
</feature>
<feature type="compositionally biased region" description="Gly residues" evidence="7">
    <location>
        <begin position="974"/>
        <end position="984"/>
    </location>
</feature>
<feature type="compositionally biased region" description="Polar residues" evidence="7">
    <location>
        <begin position="1111"/>
        <end position="1129"/>
    </location>
</feature>
<feature type="binding site" evidence="4">
    <location>
        <begin position="103"/>
        <end position="110"/>
    </location>
    <ligand>
        <name>ATP</name>
        <dbReference type="ChEBI" id="CHEBI:30616"/>
    </ligand>
</feature>
<feature type="modified residue" description="Phosphoserine" evidence="3">
    <location>
        <position position="357"/>
    </location>
</feature>
<feature type="modified residue" description="Phosphoserine" evidence="3">
    <location>
        <position position="729"/>
    </location>
</feature>
<feature type="modified residue" description="Phosphoserine" evidence="12">
    <location>
        <position position="740"/>
    </location>
</feature>
<feature type="modified residue" description="Phosphoserine" evidence="2">
    <location>
        <position position="799"/>
    </location>
</feature>
<feature type="modified residue" description="Phosphoserine" evidence="3">
    <location>
        <position position="1070"/>
    </location>
</feature>
<feature type="splice variant" id="VSP_030762" description="In isoform 2." evidence="10">
    <location>
        <begin position="1"/>
        <end position="211"/>
    </location>
</feature>
<feature type="splice variant" id="VSP_030763" description="In isoform 2." evidence="10">
    <original>SGSKQ</original>
    <variation>MHREA</variation>
    <location>
        <begin position="212"/>
        <end position="216"/>
    </location>
</feature>
<feature type="splice variant" id="VSP_030764" description="In isoform 2." evidence="10">
    <original>DRPMSPSPASGLSKGERDREINSTNFGECQI</original>
    <variation>NRL</variation>
    <location>
        <begin position="803"/>
        <end position="833"/>
    </location>
</feature>
<feature type="sequence conflict" description="In Ref. 1; AAT99088." evidence="11" ref="1">
    <original>A</original>
    <variation>T</variation>
    <location>
        <position position="323"/>
    </location>
</feature>
<feature type="sequence conflict" description="In Ref. 1; AAT99088." evidence="11" ref="1">
    <original>E</original>
    <variation>K</variation>
    <location>
        <position position="466"/>
    </location>
</feature>
<feature type="sequence conflict" description="In Ref. 1; AAT99088." evidence="11" ref="1">
    <original>G</original>
    <variation>E</variation>
    <location>
        <position position="648"/>
    </location>
</feature>
<feature type="sequence conflict" description="In Ref. 1; AAT99088." evidence="11" ref="1">
    <original>T</original>
    <variation>A</variation>
    <location>
        <position position="780"/>
    </location>
</feature>
<dbReference type="EMBL" id="AY598951">
    <property type="protein sequence ID" value="AAT99088.1"/>
    <property type="molecule type" value="mRNA"/>
</dbReference>
<dbReference type="EMBL" id="AY598952">
    <property type="protein sequence ID" value="AAT99089.1"/>
    <property type="molecule type" value="mRNA"/>
</dbReference>
<dbReference type="RefSeq" id="NP_001025216.1">
    <property type="nucleotide sequence ID" value="NM_001030045.1"/>
</dbReference>
<dbReference type="BMRB" id="Q4L1J4"/>
<dbReference type="SMR" id="Q4L1J4"/>
<dbReference type="BioGRID" id="271569">
    <property type="interactions" value="4"/>
</dbReference>
<dbReference type="CORUM" id="Q4L1J4"/>
<dbReference type="FunCoup" id="Q4L1J4">
    <property type="interactions" value="3224"/>
</dbReference>
<dbReference type="IntAct" id="Q4L1J4">
    <property type="interactions" value="7"/>
</dbReference>
<dbReference type="MINT" id="Q4L1J4"/>
<dbReference type="STRING" id="10116.ENSRNOP00000071015"/>
<dbReference type="iPTMnet" id="Q4L1J4"/>
<dbReference type="PhosphoSitePlus" id="Q4L1J4"/>
<dbReference type="PaxDb" id="10116-ENSRNOP00000065881"/>
<dbReference type="GeneID" id="500261"/>
<dbReference type="KEGG" id="rno:500261"/>
<dbReference type="UCSC" id="RGD:1586025">
    <molecule id="Q4L1J4-1"/>
    <property type="organism name" value="rat"/>
</dbReference>
<dbReference type="AGR" id="RGD:1586025"/>
<dbReference type="CTD" id="9223"/>
<dbReference type="RGD" id="1586025">
    <property type="gene designation" value="Magi1"/>
</dbReference>
<dbReference type="eggNOG" id="KOG3209">
    <property type="taxonomic scope" value="Eukaryota"/>
</dbReference>
<dbReference type="InParanoid" id="Q4L1J4"/>
<dbReference type="PhylomeDB" id="Q4L1J4"/>
<dbReference type="PRO" id="PR:Q4L1J4"/>
<dbReference type="Proteomes" id="UP000002494">
    <property type="component" value="Unplaced"/>
</dbReference>
<dbReference type="GO" id="GO:0005912">
    <property type="term" value="C:adherens junction"/>
    <property type="evidence" value="ECO:0000250"/>
    <property type="project" value="UniProtKB"/>
</dbReference>
<dbReference type="GO" id="GO:0005923">
    <property type="term" value="C:bicellular tight junction"/>
    <property type="evidence" value="ECO:0007669"/>
    <property type="project" value="UniProtKB-SubCell"/>
</dbReference>
<dbReference type="GO" id="GO:0071944">
    <property type="term" value="C:cell periphery"/>
    <property type="evidence" value="ECO:0000266"/>
    <property type="project" value="RGD"/>
</dbReference>
<dbReference type="GO" id="GO:0042995">
    <property type="term" value="C:cell projection"/>
    <property type="evidence" value="ECO:0000266"/>
    <property type="project" value="RGD"/>
</dbReference>
<dbReference type="GO" id="GO:0005911">
    <property type="term" value="C:cell-cell junction"/>
    <property type="evidence" value="ECO:0000266"/>
    <property type="project" value="RGD"/>
</dbReference>
<dbReference type="GO" id="GO:0005737">
    <property type="term" value="C:cytoplasm"/>
    <property type="evidence" value="ECO:0000266"/>
    <property type="project" value="RGD"/>
</dbReference>
<dbReference type="GO" id="GO:0016020">
    <property type="term" value="C:membrane"/>
    <property type="evidence" value="ECO:0000266"/>
    <property type="project" value="RGD"/>
</dbReference>
<dbReference type="GO" id="GO:0005634">
    <property type="term" value="C:nucleus"/>
    <property type="evidence" value="ECO:0000266"/>
    <property type="project" value="RGD"/>
</dbReference>
<dbReference type="GO" id="GO:0005886">
    <property type="term" value="C:plasma membrane"/>
    <property type="evidence" value="ECO:0000266"/>
    <property type="project" value="RGD"/>
</dbReference>
<dbReference type="GO" id="GO:0051393">
    <property type="term" value="F:alpha-actinin binding"/>
    <property type="evidence" value="ECO:0000266"/>
    <property type="project" value="RGD"/>
</dbReference>
<dbReference type="GO" id="GO:0005524">
    <property type="term" value="F:ATP binding"/>
    <property type="evidence" value="ECO:0007669"/>
    <property type="project" value="UniProtKB-KW"/>
</dbReference>
<dbReference type="GO" id="GO:0001886">
    <property type="term" value="P:endothelial cell morphogenesis"/>
    <property type="evidence" value="ECO:0000250"/>
    <property type="project" value="UniProtKB"/>
</dbReference>
<dbReference type="GO" id="GO:0022409">
    <property type="term" value="P:positive regulation of cell-cell adhesion"/>
    <property type="evidence" value="ECO:0000266"/>
    <property type="project" value="RGD"/>
</dbReference>
<dbReference type="GO" id="GO:0007165">
    <property type="term" value="P:signal transduction"/>
    <property type="evidence" value="ECO:0000318"/>
    <property type="project" value="GO_Central"/>
</dbReference>
<dbReference type="CDD" id="cd06730">
    <property type="entry name" value="PDZ0_MAGI-1_3-like"/>
    <property type="match status" value="1"/>
</dbReference>
<dbReference type="CDD" id="cd06731">
    <property type="entry name" value="PDZ1_MAGI-1_3-like"/>
    <property type="match status" value="1"/>
</dbReference>
<dbReference type="CDD" id="cd06732">
    <property type="entry name" value="PDZ2_MAGI-1_3-like"/>
    <property type="match status" value="1"/>
</dbReference>
<dbReference type="CDD" id="cd06733">
    <property type="entry name" value="PDZ3_MAGI-1_3-like"/>
    <property type="match status" value="1"/>
</dbReference>
<dbReference type="CDD" id="cd06734">
    <property type="entry name" value="PDZ4_MAGI-1_3-like"/>
    <property type="match status" value="1"/>
</dbReference>
<dbReference type="CDD" id="cd06735">
    <property type="entry name" value="PDZ5_MAGI-1_3-like"/>
    <property type="match status" value="1"/>
</dbReference>
<dbReference type="CDD" id="cd00201">
    <property type="entry name" value="WW"/>
    <property type="match status" value="2"/>
</dbReference>
<dbReference type="FunFam" id="2.30.42.10:FF:000005">
    <property type="entry name" value="Membrane associated guanylate kinase, WW and PDZ domain containing 1"/>
    <property type="match status" value="1"/>
</dbReference>
<dbReference type="FunFam" id="2.30.42.10:FF:000006">
    <property type="entry name" value="Membrane associated guanylate kinase, WW and PDZ domain containing 1"/>
    <property type="match status" value="1"/>
</dbReference>
<dbReference type="FunFam" id="2.30.42.10:FF:000012">
    <property type="entry name" value="Membrane associated guanylate kinase, WW and PDZ domain containing 1"/>
    <property type="match status" value="1"/>
</dbReference>
<dbReference type="FunFam" id="2.30.42.10:FF:000015">
    <property type="entry name" value="Membrane associated guanylate kinase, WW and PDZ domain containing 1"/>
    <property type="match status" value="1"/>
</dbReference>
<dbReference type="FunFam" id="2.20.70.10:FF:000001">
    <property type="entry name" value="Membrane-associated guanylate kinase, WW and PDZ domain-containing protein 1"/>
    <property type="match status" value="1"/>
</dbReference>
<dbReference type="FunFam" id="2.30.42.10:FF:000103">
    <property type="entry name" value="membrane-associated guanylate kinase, WW and PDZ domain-containing protein 1 isoform X2"/>
    <property type="match status" value="1"/>
</dbReference>
<dbReference type="FunFam" id="2.20.70.10:FF:000002">
    <property type="entry name" value="Membrane-associated guanylate kinase, WW and PDZ domain-containing protein 3 isoform 1"/>
    <property type="match status" value="1"/>
</dbReference>
<dbReference type="FunFam" id="2.30.42.10:FF:000042">
    <property type="entry name" value="Membrane-associated guanylate kinase, WW and PDZ domain-containing protein 3 isoform 1"/>
    <property type="match status" value="1"/>
</dbReference>
<dbReference type="FunFam" id="3.30.63.10:FF:000003">
    <property type="entry name" value="Membrane-associated guanylate kinase, WW and PDZ domain-containing protein 3 isoform 1"/>
    <property type="match status" value="1"/>
</dbReference>
<dbReference type="Gene3D" id="2.20.70.10">
    <property type="match status" value="2"/>
</dbReference>
<dbReference type="Gene3D" id="2.30.42.10">
    <property type="match status" value="6"/>
</dbReference>
<dbReference type="Gene3D" id="3.30.63.10">
    <property type="entry name" value="Guanylate Kinase phosphate binding domain"/>
    <property type="match status" value="1"/>
</dbReference>
<dbReference type="InterPro" id="IPR008145">
    <property type="entry name" value="GK/Ca_channel_bsu"/>
</dbReference>
<dbReference type="InterPro" id="IPR008144">
    <property type="entry name" value="Guanylate_kin-like_dom"/>
</dbReference>
<dbReference type="InterPro" id="IPR020590">
    <property type="entry name" value="Guanylate_kinase_CS"/>
</dbReference>
<dbReference type="InterPro" id="IPR027417">
    <property type="entry name" value="P-loop_NTPase"/>
</dbReference>
<dbReference type="InterPro" id="IPR001478">
    <property type="entry name" value="PDZ"/>
</dbReference>
<dbReference type="InterPro" id="IPR036034">
    <property type="entry name" value="PDZ_sf"/>
</dbReference>
<dbReference type="InterPro" id="IPR001202">
    <property type="entry name" value="WW_dom"/>
</dbReference>
<dbReference type="InterPro" id="IPR036020">
    <property type="entry name" value="WW_dom_sf"/>
</dbReference>
<dbReference type="PANTHER" id="PTHR10316">
    <property type="entry name" value="MEMBRANE ASSOCIATED GUANYLATE KINASE-RELATED"/>
    <property type="match status" value="1"/>
</dbReference>
<dbReference type="PANTHER" id="PTHR10316:SF12">
    <property type="entry name" value="MEMBRANE-ASSOCIATED GUANYLATE KINASE, WW AND PDZ DOMAIN-CONTAINING PROTEIN 1"/>
    <property type="match status" value="1"/>
</dbReference>
<dbReference type="Pfam" id="PF00625">
    <property type="entry name" value="Guanylate_kin"/>
    <property type="match status" value="1"/>
</dbReference>
<dbReference type="Pfam" id="PF16663">
    <property type="entry name" value="MAGI_u1"/>
    <property type="match status" value="1"/>
</dbReference>
<dbReference type="Pfam" id="PF16666">
    <property type="entry name" value="MAGI_u5"/>
    <property type="match status" value="1"/>
</dbReference>
<dbReference type="Pfam" id="PF00595">
    <property type="entry name" value="PDZ"/>
    <property type="match status" value="5"/>
</dbReference>
<dbReference type="Pfam" id="PF00397">
    <property type="entry name" value="WW"/>
    <property type="match status" value="2"/>
</dbReference>
<dbReference type="SMART" id="SM00072">
    <property type="entry name" value="GuKc"/>
    <property type="match status" value="1"/>
</dbReference>
<dbReference type="SMART" id="SM00228">
    <property type="entry name" value="PDZ"/>
    <property type="match status" value="6"/>
</dbReference>
<dbReference type="SMART" id="SM00456">
    <property type="entry name" value="WW"/>
    <property type="match status" value="2"/>
</dbReference>
<dbReference type="SUPFAM" id="SSF52540">
    <property type="entry name" value="P-loop containing nucleoside triphosphate hydrolases"/>
    <property type="match status" value="1"/>
</dbReference>
<dbReference type="SUPFAM" id="SSF50156">
    <property type="entry name" value="PDZ domain-like"/>
    <property type="match status" value="6"/>
</dbReference>
<dbReference type="SUPFAM" id="SSF51045">
    <property type="entry name" value="WW domain"/>
    <property type="match status" value="2"/>
</dbReference>
<dbReference type="PROSITE" id="PS00856">
    <property type="entry name" value="GUANYLATE_KINASE_1"/>
    <property type="match status" value="1"/>
</dbReference>
<dbReference type="PROSITE" id="PS50052">
    <property type="entry name" value="GUANYLATE_KINASE_2"/>
    <property type="match status" value="1"/>
</dbReference>
<dbReference type="PROSITE" id="PS50106">
    <property type="entry name" value="PDZ"/>
    <property type="match status" value="6"/>
</dbReference>
<dbReference type="PROSITE" id="PS01159">
    <property type="entry name" value="WW_DOMAIN_1"/>
    <property type="match status" value="2"/>
</dbReference>
<dbReference type="PROSITE" id="PS50020">
    <property type="entry name" value="WW_DOMAIN_2"/>
    <property type="match status" value="2"/>
</dbReference>
<sequence length="1255" mass="136327">MSKVIQKKNHWTGRVHECTVKRGPQGELGVTVLGGAEHGEFPYVGAVAAAEAAGLPGGGEGPKLAEGELLLEVQGVRVSGLPRYDVLGVIDSCKEAVTFKAVRQGGRLNKDLRHFLNQRFQKGSPDHELQQTIRDNLYRHAVPCTTRSPREGEVPGVDYSFLTVKEFLDLEQSGTLLEVGTYEGNYYGTPKPPSQPVSGKVITTDALHSLQSGSKQSTPKRTKSYNDMQNAGIVHTENEEEEDVPEMNSSFTADSGDQDEPTLQEATLPPVNSSALAAPITDPSQKFPQYLPLSAEDNLGPLPENWEMAYTENGEVYFIDHNAKTTSWLDPRCLNKQQKPLEECEDDEGVHTEELDSELELPAGWEKIEDPVYGVYYVDHINRKTQYENPVLEAKRKRQLEQQQQQQQHQQQPQQPQPPQPEEWTEDHASVVPPVAPSHPPSNPEPAREAPLQGKPFFTRNPSELEGKFIHTKLRKSSRGFGFTVVGGDEPDEFLQIKSLVLDGPAALDGKMETGDVIVSVNDTCVLGHTHAQVVKIFQSIPIGASVDLELCRGYPLPFDPDDPNTSLVTSVAILDKEPIIVNGQETYDSPASHSSKTGKVSNMKDARPSSPADVASNSSHGYPNDTVSLASSIATQPELITVHIVKGPMGFGFTIADSPGGGGQRVKQIVDSPRCRGLKEGDLIVEVNKRNVQALTHNQVVDMLIECPKGSEVTLLVQRGGLPVPKKSPKSQPLERKDSQNSSQHSVSSLRSLHTASPSHSAQVLPEYPPADVPAPDQTDSSGQKKPDPFKIWAQSRSMYEDRPMSPSPASGLSKGERDREINSTNFGECQIPDYQEQDIFLWRKETGFGFRILGGNEPGEPIYIGHIVPLGAADTDGRLRSGDELICVDGTPVIGKSHQLVVQLMQQAAKQGHVNLTVRRKVVFTVPKAENEVPSPASSHHSSNQPASLTEEKRTPQGSQNSLNTVSSGSGSTSGIGSGGGGGSGVVSAVLQPYDVEIRRGENEGFGFVIVSSVSRPEAGTTFAGNACVAMPHKIGRIIEGSPADRCGKLKVGDRILAVNGCSITNKSHSDIVNLIKEAGNTVTLRIIPGDESSNATLLTNAEKIATITTTHAPSQQGTQETRTTTKPKPDSQFEFKGPQATQEQDFYTVELERGAKGFGFSLRGGREYNMDLYVLRLAEDGPAERCGKMRIGDEILEINGETTKNMKHSRAIELIKNGGRRVRLFLRRGDGSVPEYGGSNYENIPSFPGMTP</sequence>
<reference key="1">
    <citation type="submission" date="2004-04" db="EMBL/GenBank/DDBJ databases">
        <authorList>
            <person name="Tanemoto M."/>
            <person name="Abe T."/>
            <person name="Ito S."/>
        </authorList>
    </citation>
    <scope>NUCLEOTIDE SEQUENCE [MRNA] (ISOFORMS 1 AND 2)</scope>
    <source>
        <strain>Sprague-Dawley</strain>
    </source>
</reference>
<reference key="2">
    <citation type="journal article" date="2005" name="Lab. Invest.">
        <title>MAGI-1 is a component of the glomerular slit diaphragm that is tightly associated with nephrin.</title>
        <authorList>
            <person name="Hirabayashi S."/>
            <person name="Mori H."/>
            <person name="Kansaku A."/>
            <person name="Kurihara H."/>
            <person name="Sakai T."/>
            <person name="Shimizu F."/>
            <person name="Kawachi H."/>
            <person name="Hata Y."/>
        </authorList>
    </citation>
    <scope>INTERACTION WITH IGSF5 AND NPHS1</scope>
</reference>
<reference key="3">
    <citation type="journal article" date="2006" name="J. Biochem.">
        <title>CIN85 is localized at synapses and forms a complex with S-SCAM via dendrin.</title>
        <authorList>
            <person name="Kawata A."/>
            <person name="Iida J."/>
            <person name="Ikeda M."/>
            <person name="Sato Y."/>
            <person name="Mori H."/>
            <person name="Kansaku A."/>
            <person name="Sumita K."/>
            <person name="Fujiwara N."/>
            <person name="Rokukawa C."/>
            <person name="Hamano M."/>
            <person name="Hirabayashi S."/>
            <person name="Hata Y."/>
        </authorList>
    </citation>
    <scope>INTERACTION WITH DDN</scope>
</reference>
<reference key="4">
    <citation type="journal article" date="2012" name="Nat. Commun.">
        <title>Quantitative maps of protein phosphorylation sites across 14 different rat organs and tissues.</title>
        <authorList>
            <person name="Lundby A."/>
            <person name="Secher A."/>
            <person name="Lage K."/>
            <person name="Nordsborg N.B."/>
            <person name="Dmytriyev A."/>
            <person name="Lundby C."/>
            <person name="Olsen J.V."/>
        </authorList>
    </citation>
    <scope>PHOSPHORYLATION [LARGE SCALE ANALYSIS] AT SER-740</scope>
    <scope>IDENTIFICATION BY MASS SPECTROMETRY [LARGE SCALE ANALYSIS]</scope>
</reference>
<gene>
    <name type="primary">Magi1</name>
    <name type="synonym">Baiap1</name>
    <name type="synonym">Bap1</name>
</gene>
<keyword id="KW-0025">Alternative splicing</keyword>
<keyword id="KW-0067">ATP-binding</keyword>
<keyword id="KW-0965">Cell junction</keyword>
<keyword id="KW-0963">Cytoplasm</keyword>
<keyword id="KW-0472">Membrane</keyword>
<keyword id="KW-0547">Nucleotide-binding</keyword>
<keyword id="KW-0597">Phosphoprotein</keyword>
<keyword id="KW-1185">Reference proteome</keyword>
<keyword id="KW-0677">Repeat</keyword>
<keyword id="KW-0796">Tight junction</keyword>
<protein>
    <recommendedName>
        <fullName>Membrane-associated guanylate kinase, WW and PDZ domain-containing protein 1</fullName>
    </recommendedName>
    <alternativeName>
        <fullName>BAI1-associated protein 1</fullName>
        <shortName>BAP-1</shortName>
    </alternativeName>
    <alternativeName>
        <fullName>Membrane-associated guanylate kinase inverted 1</fullName>
        <shortName>MAGI-1</shortName>
    </alternativeName>
</protein>
<accession>Q4L1J4</accession>
<accession>Q4L1J5</accession>
<comment type="function">
    <text evidence="2">Plays a role in coupling actin fibers to cell junctions in endothelial cells, via its interaction with AMOTL2 and CDH5 (By similarity). May regulate acid-induced ASIC3 currents by modulating its expression at the cell surface.</text>
</comment>
<comment type="subunit">
    <text evidence="2 3 8 9">Part of a complex composed of AMOTL2, MAGI1 and CDH5, within the complex AMOTL2 acts as a scaffold protein for the interaction of MAGI1 with CDH5 (By similarity). The complex is required for coupling actin fibers to cell junctions in endothelial cells (By similarity). Interacts through its WW 2 domain with SYNPO and through its PDZ 5 domain with ACTN4. Interacts with cytoplasmic domain of ADGRB1. Interacts via its WW domains with DRPLA (By similarity). Interacts with ESAM, LRP2 and CXADR. May interact with CTNNB1. Interacts through its PDZ 1 domain with NET1 (By similarity). Interacts with ASIC3 and AMOT. Interacts with FCHSD2 (By similarity). Interacts with IGSF5/JAM4 and through its PDZ 2 and 3 domains with NPHS1 forming a tripartite complex (PubMed:16155592). Interacts with DDN (PubMed:16751601). May interact (via PDZ domain) with RAPGEF2 (By similarity). Interacts with DLL1 (By similarity). Interacts with KCNJ10 and possibly with KCNJ10/KCNJ16 heterodimer; this interaction may facilitate KCNJ10/KCNJ16 potassium channel expression at the basolateral membrane in kidney tubular cells (By similarity). Interacts with PRRG4 (via cytoplasmic domain) (By similarity).</text>
</comment>
<comment type="subcellular location">
    <subcellularLocation>
        <location evidence="1">Cell junction</location>
        <location evidence="1">Tight junction</location>
    </subcellularLocation>
    <subcellularLocation>
        <location evidence="1">Cytoplasm</location>
    </subcellularLocation>
    <subcellularLocation>
        <location evidence="11">Membrane</location>
        <topology evidence="11">Peripheral membrane protein</topology>
    </subcellularLocation>
    <text evidence="1">Localizes to epithelial cells tight junctions.</text>
</comment>
<comment type="alternative products">
    <event type="alternative splicing"/>
    <isoform>
        <id>Q4L1J4-1</id>
        <name>1</name>
        <sequence type="displayed"/>
    </isoform>
    <isoform>
        <id>Q4L1J4-2</id>
        <name>2</name>
        <name>NT-short isoform</name>
        <sequence type="described" ref="VSP_030762 VSP_030763 VSP_030764"/>
    </isoform>
</comment>
<evidence type="ECO:0000250" key="1"/>
<evidence type="ECO:0000250" key="2">
    <source>
        <dbReference type="UniProtKB" id="Q6RHR9"/>
    </source>
</evidence>
<evidence type="ECO:0000250" key="3">
    <source>
        <dbReference type="UniProtKB" id="Q96QZ7"/>
    </source>
</evidence>
<evidence type="ECO:0000255" key="4">
    <source>
        <dbReference type="PROSITE-ProRule" id="PRU00100"/>
    </source>
</evidence>
<evidence type="ECO:0000255" key="5">
    <source>
        <dbReference type="PROSITE-ProRule" id="PRU00143"/>
    </source>
</evidence>
<evidence type="ECO:0000255" key="6">
    <source>
        <dbReference type="PROSITE-ProRule" id="PRU00224"/>
    </source>
</evidence>
<evidence type="ECO:0000256" key="7">
    <source>
        <dbReference type="SAM" id="MobiDB-lite"/>
    </source>
</evidence>
<evidence type="ECO:0000269" key="8">
    <source>
    </source>
</evidence>
<evidence type="ECO:0000269" key="9">
    <source>
    </source>
</evidence>
<evidence type="ECO:0000303" key="10">
    <source ref="1"/>
</evidence>
<evidence type="ECO:0000305" key="11"/>
<evidence type="ECO:0007744" key="12">
    <source>
    </source>
</evidence>
<organism>
    <name type="scientific">Rattus norvegicus</name>
    <name type="common">Rat</name>
    <dbReference type="NCBI Taxonomy" id="10116"/>
    <lineage>
        <taxon>Eukaryota</taxon>
        <taxon>Metazoa</taxon>
        <taxon>Chordata</taxon>
        <taxon>Craniata</taxon>
        <taxon>Vertebrata</taxon>
        <taxon>Euteleostomi</taxon>
        <taxon>Mammalia</taxon>
        <taxon>Eutheria</taxon>
        <taxon>Euarchontoglires</taxon>
        <taxon>Glires</taxon>
        <taxon>Rodentia</taxon>
        <taxon>Myomorpha</taxon>
        <taxon>Muroidea</taxon>
        <taxon>Muridae</taxon>
        <taxon>Murinae</taxon>
        <taxon>Rattus</taxon>
    </lineage>
</organism>
<name>MAGI1_RAT</name>